<dbReference type="EC" id="2.7.1.134" evidence="5"/>
<dbReference type="EC" id="2.7.1.159" evidence="5"/>
<dbReference type="EC" id="2.7.4.21" evidence="8"/>
<dbReference type="EMBL" id="EU033959">
    <property type="protein sequence ID" value="ABU93832.1"/>
    <property type="molecule type" value="mRNA"/>
</dbReference>
<dbReference type="EMBL" id="KJ579138">
    <property type="protein sequence ID" value="AIB06202.1"/>
    <property type="molecule type" value="mRNA"/>
</dbReference>
<dbReference type="EMBL" id="CM000850">
    <property type="protein sequence ID" value="KRH03285.1"/>
    <property type="molecule type" value="Genomic_DNA"/>
</dbReference>
<dbReference type="RefSeq" id="NP_001237466.1">
    <property type="nucleotide sequence ID" value="NM_001250537.2"/>
</dbReference>
<dbReference type="SMR" id="A7X665"/>
<dbReference type="STRING" id="3847.A7X665"/>
<dbReference type="PaxDb" id="3847-GLYMA17G09680.1"/>
<dbReference type="PRIDE" id="A7X665"/>
<dbReference type="EnsemblPlants" id="KRH03285">
    <property type="protein sequence ID" value="KRH03285"/>
    <property type="gene ID" value="GLYMA_17G089000"/>
</dbReference>
<dbReference type="GeneID" id="100127408"/>
<dbReference type="Gramene" id="KRH03285">
    <property type="protein sequence ID" value="KRH03285"/>
    <property type="gene ID" value="GLYMA_17G089000"/>
</dbReference>
<dbReference type="KEGG" id="gmx:100127408"/>
<dbReference type="eggNOG" id="ENOG502QQS1">
    <property type="taxonomic scope" value="Eukaryota"/>
</dbReference>
<dbReference type="HOGENOM" id="CLU_041857_0_0_1"/>
<dbReference type="InParanoid" id="A7X665"/>
<dbReference type="OMA" id="CIIHKLH"/>
<dbReference type="OrthoDB" id="25308at2759"/>
<dbReference type="BRENDA" id="2.7.1.159">
    <property type="organism ID" value="2483"/>
</dbReference>
<dbReference type="Proteomes" id="UP000008827">
    <property type="component" value="Chromosome 17"/>
</dbReference>
<dbReference type="GO" id="GO:0005524">
    <property type="term" value="F:ATP binding"/>
    <property type="evidence" value="ECO:0007669"/>
    <property type="project" value="UniProtKB-KW"/>
</dbReference>
<dbReference type="GO" id="GO:0052726">
    <property type="term" value="F:inositol-1,3,4-trisphosphate 5-kinase activity"/>
    <property type="evidence" value="ECO:0000314"/>
    <property type="project" value="UniProtKB"/>
</dbReference>
<dbReference type="GO" id="GO:0052725">
    <property type="term" value="F:inositol-1,3,4-trisphosphate 6-kinase activity"/>
    <property type="evidence" value="ECO:0000314"/>
    <property type="project" value="UniProtKB"/>
</dbReference>
<dbReference type="GO" id="GO:0047325">
    <property type="term" value="F:inositol-3,4,5,6-tetrakisphosphate 1-kinase activity"/>
    <property type="evidence" value="ECO:0000314"/>
    <property type="project" value="UniProtKB"/>
</dbReference>
<dbReference type="GO" id="GO:0052835">
    <property type="term" value="F:inositol-3,4,6-trisphosphate 1-kinase activity"/>
    <property type="evidence" value="ECO:0000314"/>
    <property type="project" value="UniProtKB"/>
</dbReference>
<dbReference type="GO" id="GO:0000287">
    <property type="term" value="F:magnesium ion binding"/>
    <property type="evidence" value="ECO:0007669"/>
    <property type="project" value="InterPro"/>
</dbReference>
<dbReference type="GO" id="GO:0032957">
    <property type="term" value="P:inositol trisphosphate metabolic process"/>
    <property type="evidence" value="ECO:0007669"/>
    <property type="project" value="InterPro"/>
</dbReference>
<dbReference type="GO" id="GO:0009737">
    <property type="term" value="P:response to abscisic acid"/>
    <property type="evidence" value="ECO:0000270"/>
    <property type="project" value="UniProtKB"/>
</dbReference>
<dbReference type="GO" id="GO:0009651">
    <property type="term" value="P:response to salt stress"/>
    <property type="evidence" value="ECO:0000314"/>
    <property type="project" value="UniProtKB"/>
</dbReference>
<dbReference type="GO" id="GO:0009414">
    <property type="term" value="P:response to water deprivation"/>
    <property type="evidence" value="ECO:0000314"/>
    <property type="project" value="UniProtKB"/>
</dbReference>
<dbReference type="FunFam" id="3.30.1490.220:FF:000002">
    <property type="entry name" value="Inositol-tetrakisphosphate 1-kinase"/>
    <property type="match status" value="1"/>
</dbReference>
<dbReference type="FunFam" id="3.40.50.11370:FF:000005">
    <property type="entry name" value="Inositol-tetrakisphosphate 1-kinase"/>
    <property type="match status" value="1"/>
</dbReference>
<dbReference type="Gene3D" id="3.30.1490.220">
    <property type="match status" value="1"/>
</dbReference>
<dbReference type="Gene3D" id="3.40.50.11370">
    <property type="match status" value="1"/>
</dbReference>
<dbReference type="Gene3D" id="3.30.470.20">
    <property type="entry name" value="ATP-grasp fold, B domain"/>
    <property type="match status" value="1"/>
</dbReference>
<dbReference type="InterPro" id="IPR011761">
    <property type="entry name" value="ATP-grasp"/>
</dbReference>
<dbReference type="InterPro" id="IPR008656">
    <property type="entry name" value="Inositol_tetrakis-P_1-kinase"/>
</dbReference>
<dbReference type="InterPro" id="IPR040464">
    <property type="entry name" value="InsP(3)kin_ATP-grasp"/>
</dbReference>
<dbReference type="InterPro" id="IPR041429">
    <property type="entry name" value="ITPK1_N"/>
</dbReference>
<dbReference type="PANTHER" id="PTHR14217">
    <property type="entry name" value="INOSITOL-TETRAKISPHOSPHATE 1-KINASE"/>
    <property type="match status" value="1"/>
</dbReference>
<dbReference type="PANTHER" id="PTHR14217:SF40">
    <property type="entry name" value="INOSITOL-TETRAKISPHOSPHATE 1-KINASE 2"/>
    <property type="match status" value="1"/>
</dbReference>
<dbReference type="Pfam" id="PF05770">
    <property type="entry name" value="Ins134_P3_kin"/>
    <property type="match status" value="1"/>
</dbReference>
<dbReference type="Pfam" id="PF17927">
    <property type="entry name" value="Ins134_P3_kin_N"/>
    <property type="match status" value="1"/>
</dbReference>
<dbReference type="PIRSF" id="PIRSF038186">
    <property type="entry name" value="ITPK"/>
    <property type="match status" value="1"/>
</dbReference>
<dbReference type="SUPFAM" id="SSF56059">
    <property type="entry name" value="Glutathione synthetase ATP-binding domain-like"/>
    <property type="match status" value="1"/>
</dbReference>
<dbReference type="PROSITE" id="PS50975">
    <property type="entry name" value="ATP_GRASP"/>
    <property type="match status" value="1"/>
</dbReference>
<organism>
    <name type="scientific">Glycine max</name>
    <name type="common">Soybean</name>
    <name type="synonym">Glycine hispida</name>
    <dbReference type="NCBI Taxonomy" id="3847"/>
    <lineage>
        <taxon>Eukaryota</taxon>
        <taxon>Viridiplantae</taxon>
        <taxon>Streptophyta</taxon>
        <taxon>Embryophyta</taxon>
        <taxon>Tracheophyta</taxon>
        <taxon>Spermatophyta</taxon>
        <taxon>Magnoliopsida</taxon>
        <taxon>eudicotyledons</taxon>
        <taxon>Gunneridae</taxon>
        <taxon>Pentapetalae</taxon>
        <taxon>rosids</taxon>
        <taxon>fabids</taxon>
        <taxon>Fabales</taxon>
        <taxon>Fabaceae</taxon>
        <taxon>Papilionoideae</taxon>
        <taxon>50 kb inversion clade</taxon>
        <taxon>NPAAA clade</taxon>
        <taxon>indigoferoid/millettioid clade</taxon>
        <taxon>Phaseoleae</taxon>
        <taxon>Glycine</taxon>
        <taxon>Glycine subgen. Soja</taxon>
    </lineage>
</organism>
<name>ITPK2_SOYBN</name>
<sequence length="315" mass="35013">MSESEVAGQRYRVGYALQGKKVESFIQPSLLDHAKQHSIDLVQIDPTAPLQQQGPFHCIIHKLHTQHWKNLLQQFSSKHPNTVIIDPPELVDRLHNRVSMLDAVTHLQFSLENATIGVPKQVVVNEPKSFDLHKFEEEQGLRFPVIAKPLAADGGAGSHELCLVFDEEGLHALSVPMVLQEFVNHGGVVFKIYVAGQRVNCVKRKSLGDITEEKLKVLRGSLPFSRVSSLGVEDEGGGAVEDAEMPPQSLVGELARGLREALGLNLFNVDVIRDGKEPTRYLVIDINYFPGYAKLPSYEPFITDFLLDIVRSKTA</sequence>
<accession>A7X665</accession>
<proteinExistence type="evidence at protein level"/>
<comment type="function">
    <text evidence="5 6 8">Kinase that can phosphorylate various inositol polyphosphate such as Ins(3,4,5,6)P4, Ins(3,4,6)P3 and Ins(1,3,4)P3 (PubMed:18474240). May participate in an inositol lipid-independent pathway of InsP6 synthesis (PubMed:18474240). Barely able to add a beta-phosphate to InsP6 to yield 5-InsP7, thus exhibiting negligible InsP6 kinase activity (PubMed:35635723). Also has Ins(1,3,4,5,6)P5 phosphatase activity (PubMed:35635723). Probably involved in the regulation of drought and salinity tolerance by diverting the flux of inositol phosphate pool towards phytate biosynthesis (PubMed:29289899).</text>
</comment>
<comment type="catalytic activity">
    <reaction evidence="5">
        <text>1D-myo-inositol 1,3,4-trisphosphate + ATP = 1D-myo-inositol 1,3,4,5-tetrakisphosphate + ADP + H(+)</text>
        <dbReference type="Rhea" id="RHEA:13253"/>
        <dbReference type="ChEBI" id="CHEBI:15378"/>
        <dbReference type="ChEBI" id="CHEBI:30616"/>
        <dbReference type="ChEBI" id="CHEBI:57895"/>
        <dbReference type="ChEBI" id="CHEBI:58414"/>
        <dbReference type="ChEBI" id="CHEBI:456216"/>
        <dbReference type="EC" id="2.7.1.159"/>
    </reaction>
    <physiologicalReaction direction="left-to-right" evidence="5">
        <dbReference type="Rhea" id="RHEA:13254"/>
    </physiologicalReaction>
</comment>
<comment type="catalytic activity">
    <reaction evidence="5">
        <text>1D-myo-inositol 1,3,4-trisphosphate + ATP = 1D-myo-inositol 1,3,4,6-tetrakisphosphate + ADP + H(+)</text>
        <dbReference type="Rhea" id="RHEA:20940"/>
        <dbReference type="ChEBI" id="CHEBI:15378"/>
        <dbReference type="ChEBI" id="CHEBI:30616"/>
        <dbReference type="ChEBI" id="CHEBI:57660"/>
        <dbReference type="ChEBI" id="CHEBI:58414"/>
        <dbReference type="ChEBI" id="CHEBI:456216"/>
        <dbReference type="EC" id="2.7.1.159"/>
    </reaction>
    <physiologicalReaction direction="left-to-right" evidence="5">
        <dbReference type="Rhea" id="RHEA:20941"/>
    </physiologicalReaction>
</comment>
<comment type="catalytic activity">
    <reaction evidence="5 8">
        <text>1D-myo-inositol 3,4,5,6-tetrakisphosphate + ATP = 1D-myo-inositol 1,3,4,5,6-pentakisphosphate + ADP + H(+)</text>
        <dbReference type="Rhea" id="RHEA:12452"/>
        <dbReference type="ChEBI" id="CHEBI:15378"/>
        <dbReference type="ChEBI" id="CHEBI:30616"/>
        <dbReference type="ChEBI" id="CHEBI:57539"/>
        <dbReference type="ChEBI" id="CHEBI:57733"/>
        <dbReference type="ChEBI" id="CHEBI:456216"/>
        <dbReference type="EC" id="2.7.1.134"/>
    </reaction>
    <physiologicalReaction direction="left-to-right" evidence="5">
        <dbReference type="Rhea" id="RHEA:12453"/>
    </physiologicalReaction>
    <physiologicalReaction direction="right-to-left" evidence="8">
        <dbReference type="Rhea" id="RHEA:12454"/>
    </physiologicalReaction>
</comment>
<comment type="catalytic activity">
    <reaction evidence="5">
        <text>1D-myo-inositol 3,4,6-trisphosphate + ATP = 1D-myo-inositol 1,3,4,6-tetrakisphosphate + ADP + H(+)</text>
        <dbReference type="Rhea" id="RHEA:70287"/>
        <dbReference type="ChEBI" id="CHEBI:15378"/>
        <dbReference type="ChEBI" id="CHEBI:30616"/>
        <dbReference type="ChEBI" id="CHEBI:57660"/>
        <dbReference type="ChEBI" id="CHEBI:189099"/>
        <dbReference type="ChEBI" id="CHEBI:456216"/>
    </reaction>
    <physiologicalReaction direction="left-to-right" evidence="5">
        <dbReference type="Rhea" id="RHEA:70288"/>
    </physiologicalReaction>
</comment>
<comment type="catalytic activity">
    <reaction evidence="8">
        <text>1D-myo-inositol hexakisphosphate + ATP = 5-diphospho-1D-myo-inositol 1,2,3,4,6-pentakisphosphate + ADP</text>
        <dbReference type="Rhea" id="RHEA:12793"/>
        <dbReference type="ChEBI" id="CHEBI:30616"/>
        <dbReference type="ChEBI" id="CHEBI:58130"/>
        <dbReference type="ChEBI" id="CHEBI:58628"/>
        <dbReference type="ChEBI" id="CHEBI:456216"/>
        <dbReference type="EC" id="2.7.4.21"/>
    </reaction>
    <physiologicalReaction direction="left-to-right" evidence="8">
        <dbReference type="Rhea" id="RHEA:12794"/>
    </physiologicalReaction>
</comment>
<comment type="cofactor">
    <cofactor evidence="1">
        <name>Mg(2+)</name>
        <dbReference type="ChEBI" id="CHEBI:18420"/>
    </cofactor>
    <text evidence="1">Binds 2 magnesium ions per subunit.</text>
</comment>
<comment type="biophysicochemical properties">
    <kinetics>
        <KM evidence="5">46.2 uM for Ins(1,3,4)P3</KM>
        <KM evidence="5">0.78 uM for Ins(3,4,5,6)P4</KM>
        <Vmax evidence="5">1.97 umol/min/mg enzyme with Ins(1,3,4)P3 as substrate</Vmax>
        <Vmax evidence="5">0.76 umol/min/mg enzyme with Ins(3,4,5,6)P4 as substrate</Vmax>
    </kinetics>
</comment>
<comment type="subunit">
    <text evidence="1">Monomer.</text>
</comment>
<comment type="tissue specificity">
    <text evidence="5 7">Expressed in seeds (PubMed:18474240, PubMed:29354361). Mainly expressed in seedlings, and, to a lower extent, in roots, flowers, stems and leaves (PubMed:18474240, PubMed:29354361).</text>
</comment>
<comment type="developmental stage">
    <text evidence="7">In developing seeds, mostly expressed in early stages.</text>
</comment>
<comment type="induction">
    <text evidence="6">Induced by drought (early dehydration responsive) and salinity stress (PubMed:29289899). Triggered by abscisic acid (ABA) (PubMed:29289899).</text>
</comment>
<comment type="similarity">
    <text evidence="11">Belongs to the ITPK1 family.</text>
</comment>
<feature type="chain" id="PRO_0000457405" description="Inositol-tetrakisphosphate 1-kinase 2">
    <location>
        <begin position="1"/>
        <end position="315"/>
    </location>
</feature>
<feature type="domain" description="ATP-grasp" evidence="4">
    <location>
        <begin position="108"/>
        <end position="314"/>
    </location>
</feature>
<feature type="region of interest" description="Catalytic specificity elements (CSE)" evidence="12">
    <location>
        <begin position="214"/>
        <end position="240"/>
    </location>
</feature>
<feature type="binding site" evidence="3">
    <location>
        <position position="20"/>
    </location>
    <ligand>
        <name>1D-myo-inositol 6-phosphate</name>
        <dbReference type="ChEBI" id="CHEBI:64841"/>
    </ligand>
</feature>
<feature type="binding site" evidence="3">
    <location>
        <position position="62"/>
    </location>
    <ligand>
        <name>1D-myo-inositol 6-phosphate</name>
        <dbReference type="ChEBI" id="CHEBI:64841"/>
    </ligand>
</feature>
<feature type="binding site" evidence="1">
    <location>
        <position position="97"/>
    </location>
    <ligand>
        <name>ATP</name>
        <dbReference type="ChEBI" id="CHEBI:30616"/>
    </ligand>
</feature>
<feature type="binding site" evidence="1">
    <location>
        <position position="148"/>
    </location>
    <ligand>
        <name>ATP</name>
        <dbReference type="ChEBI" id="CHEBI:30616"/>
    </ligand>
</feature>
<feature type="binding site" evidence="3">
    <location>
        <position position="154"/>
    </location>
    <ligand>
        <name>1D-myo-inositol 6-phosphate</name>
        <dbReference type="ChEBI" id="CHEBI:64841"/>
    </ligand>
</feature>
<feature type="binding site" evidence="3">
    <location>
        <position position="159"/>
    </location>
    <ligand>
        <name>1D-myo-inositol 6-phosphate</name>
        <dbReference type="ChEBI" id="CHEBI:64841"/>
    </ligand>
</feature>
<feature type="binding site" evidence="3">
    <location>
        <position position="159"/>
    </location>
    <ligand>
        <name>ATP</name>
        <dbReference type="ChEBI" id="CHEBI:30616"/>
    </ligand>
</feature>
<feature type="binding site" evidence="3">
    <location>
        <position position="180"/>
    </location>
    <ligand>
        <name>ATP</name>
        <dbReference type="ChEBI" id="CHEBI:30616"/>
    </ligand>
</feature>
<feature type="binding site" evidence="3">
    <location>
        <position position="183"/>
    </location>
    <ligand>
        <name>ATP</name>
        <dbReference type="ChEBI" id="CHEBI:30616"/>
    </ligand>
</feature>
<feature type="binding site" evidence="3">
    <location>
        <position position="191"/>
    </location>
    <ligand>
        <name>1D-myo-inositol 6-phosphate</name>
        <dbReference type="ChEBI" id="CHEBI:64841"/>
    </ligand>
</feature>
<feature type="binding site" evidence="2">
    <location>
        <position position="193"/>
    </location>
    <ligand>
        <name>1D-myo-inositol 6-phosphate</name>
        <dbReference type="ChEBI" id="CHEBI:64841"/>
    </ligand>
</feature>
<feature type="binding site" evidence="1">
    <location>
        <position position="206"/>
    </location>
    <ligand>
        <name>ATP</name>
        <dbReference type="ChEBI" id="CHEBI:30616"/>
    </ligand>
</feature>
<feature type="binding site" evidence="2">
    <location>
        <position position="268"/>
    </location>
    <ligand>
        <name>1D-myo-inositol 6-phosphate</name>
        <dbReference type="ChEBI" id="CHEBI:64841"/>
    </ligand>
</feature>
<feature type="binding site" evidence="1">
    <location>
        <position position="270"/>
    </location>
    <ligand>
        <name>Mg(2+)</name>
        <dbReference type="ChEBI" id="CHEBI:18420"/>
        <label>1</label>
    </ligand>
</feature>
<feature type="binding site" evidence="3">
    <location>
        <position position="284"/>
    </location>
    <ligand>
        <name>ATP</name>
        <dbReference type="ChEBI" id="CHEBI:30616"/>
    </ligand>
</feature>
<feature type="binding site" evidence="3">
    <location>
        <position position="285"/>
    </location>
    <ligand>
        <name>ATP</name>
        <dbReference type="ChEBI" id="CHEBI:30616"/>
    </ligand>
</feature>
<feature type="binding site" evidence="1">
    <location>
        <position position="285"/>
    </location>
    <ligand>
        <name>Mg(2+)</name>
        <dbReference type="ChEBI" id="CHEBI:18420"/>
        <label>1</label>
    </ligand>
</feature>
<feature type="binding site" evidence="1">
    <location>
        <position position="285"/>
    </location>
    <ligand>
        <name>Mg(2+)</name>
        <dbReference type="ChEBI" id="CHEBI:18420"/>
        <label>2</label>
    </ligand>
</feature>
<feature type="binding site" evidence="3">
    <location>
        <position position="287"/>
    </location>
    <ligand>
        <name>1D-myo-inositol 6-phosphate</name>
        <dbReference type="ChEBI" id="CHEBI:64841"/>
    </ligand>
</feature>
<feature type="binding site" evidence="3">
    <location>
        <position position="287"/>
    </location>
    <ligand>
        <name>ATP</name>
        <dbReference type="ChEBI" id="CHEBI:30616"/>
    </ligand>
</feature>
<feature type="binding site" evidence="1">
    <location>
        <position position="287"/>
    </location>
    <ligand>
        <name>Mg(2+)</name>
        <dbReference type="ChEBI" id="CHEBI:18420"/>
        <label>2</label>
    </ligand>
</feature>
<feature type="binding site" evidence="2">
    <location>
        <position position="291"/>
    </location>
    <ligand>
        <name>1D-myo-inositol 6-phosphate</name>
        <dbReference type="ChEBI" id="CHEBI:64841"/>
    </ligand>
</feature>
<feature type="binding site" evidence="2">
    <location>
        <position position="294"/>
    </location>
    <ligand>
        <name>1D-myo-inositol 6-phosphate</name>
        <dbReference type="ChEBI" id="CHEBI:64841"/>
    </ligand>
</feature>
<feature type="mutagenesis site" description="Gain-of-function InsP6 kinase activity and slightly reduced Ins(1,3,4,5,6)P5 phosphatase activity." evidence="8">
    <original>KLKVLRGSLPFSRVSSLGVEDEGGGAV</original>
    <variation>EKALGGVSEDLMSFSQVSNLATVNDCDGYYRLMHLD</variation>
    <location>
        <begin position="214"/>
        <end position="240"/>
    </location>
</feature>
<reference key="1">
    <citation type="journal article" date="2008" name="FEBS Lett.">
        <title>Metabolic and signaling properties of an Itpk gene family in Glycine max.</title>
        <authorList>
            <person name="Stiles A.R."/>
            <person name="Qian X."/>
            <person name="Shears S.B."/>
            <person name="Grabau E.A."/>
        </authorList>
    </citation>
    <scope>NUCLEOTIDE SEQUENCE [MRNA]</scope>
    <scope>FUNCTION</scope>
    <scope>CATALYTIC ACTIVITY</scope>
    <scope>BIOPHYSICOCHEMICAL PROPERTIES</scope>
    <scope>TISSUE SPECIFICITY</scope>
</reference>
<reference key="2">
    <citation type="journal article" date="2018" name="Plant Physiol. Biochem.">
        <title>Exploring the role of Inositol 1,3,4-trisphosphate 5/6 kinase-2 (GmITPK2) as a dehydration and salinity stress regulator in Glycine max (L.) Merr. through heterologous expression in E. coli.</title>
        <authorList>
            <person name="Marathe A."/>
            <person name="Krishnan V."/>
            <person name="Vinutha T."/>
            <person name="Dahuja A."/>
            <person name="Jolly M."/>
            <person name="Sachdev A."/>
        </authorList>
    </citation>
    <scope>NUCLEOTIDE SEQUENCE [MRNA]</scope>
    <scope>FUNCTION</scope>
    <scope>INDUCTION BY DROUGHT; ABSCISIC ACID AND SALINITY STRESS</scope>
    <source>
        <strain>cv. Pusa-16</strain>
    </source>
</reference>
<reference key="3">
    <citation type="journal article" date="2010" name="Nature">
        <title>Genome sequence of the palaeopolyploid soybean.</title>
        <authorList>
            <person name="Schmutz J."/>
            <person name="Cannon S.B."/>
            <person name="Schlueter J."/>
            <person name="Ma J."/>
            <person name="Mitros T."/>
            <person name="Nelson W."/>
            <person name="Hyten D.L."/>
            <person name="Song Q."/>
            <person name="Thelen J.J."/>
            <person name="Cheng J."/>
            <person name="Xu D."/>
            <person name="Hellsten U."/>
            <person name="May G.D."/>
            <person name="Yu Y."/>
            <person name="Sakurai T."/>
            <person name="Umezawa T."/>
            <person name="Bhattacharyya M.K."/>
            <person name="Sandhu D."/>
            <person name="Valliyodan B."/>
            <person name="Lindquist E."/>
            <person name="Peto M."/>
            <person name="Grant D."/>
            <person name="Shu S."/>
            <person name="Goodstein D."/>
            <person name="Barry K."/>
            <person name="Futrell-Griggs M."/>
            <person name="Abernathy B."/>
            <person name="Du J."/>
            <person name="Tian Z."/>
            <person name="Zhu L."/>
            <person name="Gill N."/>
            <person name="Joshi T."/>
            <person name="Libault M."/>
            <person name="Sethuraman A."/>
            <person name="Zhang X.-C."/>
            <person name="Shinozaki K."/>
            <person name="Nguyen H.T."/>
            <person name="Wing R.A."/>
            <person name="Cregan P."/>
            <person name="Specht J."/>
            <person name="Grimwood J."/>
            <person name="Rokhsar D."/>
            <person name="Stacey G."/>
            <person name="Shoemaker R.C."/>
            <person name="Jackson S.A."/>
        </authorList>
    </citation>
    <scope>NUCLEOTIDE SEQUENCE [LARGE SCALE GENOMIC DNA]</scope>
    <source>
        <strain>cv. Williams 82</strain>
        <tissue>Callus</tissue>
    </source>
</reference>
<reference key="4">
    <citation type="journal article" date="2018" name="3 Biotech.">
        <title>Characterization and molecular modeling of Inositol 1,3,4 tris phosphate 5/6 kinase-2 from Glycine max (L) Merr.: comprehending its evolutionary conservancy at functional level.</title>
        <authorList>
            <person name="Marathe A."/>
            <person name="Krishnan V."/>
            <person name="Mahajan M.M."/>
            <person name="Thimmegowda V."/>
            <person name="Dahuja A."/>
            <person name="Jolly M."/>
            <person name="Praveen S."/>
            <person name="Sachdev A."/>
        </authorList>
    </citation>
    <scope>TISSUE SPECIFICITY</scope>
    <scope>DEVELOPMENTAL STAGE</scope>
    <source>
        <strain>cv. Pusa-16</strain>
    </source>
</reference>
<reference key="5">
    <citation type="journal article" date="2022" name="FASEB J.">
        <title>Structural and catalytic analyses of the InsP6 kinase activities of higher plant ITPKs.</title>
        <authorList>
            <person name="Zong G."/>
            <person name="Shears S.B."/>
            <person name="Wang H."/>
        </authorList>
    </citation>
    <scope>FUNCTION</scope>
    <scope>MUTAGENESIS OF 214-LYS--VAL-240</scope>
    <scope>CATALYTIC ACTIVITY</scope>
</reference>
<evidence type="ECO:0000250" key="1">
    <source>
        <dbReference type="UniProtKB" id="Q13572"/>
    </source>
</evidence>
<evidence type="ECO:0000250" key="2">
    <source>
        <dbReference type="UniProtKB" id="Q84Y01"/>
    </source>
</evidence>
<evidence type="ECO:0000250" key="3">
    <source>
        <dbReference type="UniProtKB" id="Q9XYQ1"/>
    </source>
</evidence>
<evidence type="ECO:0000255" key="4">
    <source>
        <dbReference type="PROSITE-ProRule" id="PRU00409"/>
    </source>
</evidence>
<evidence type="ECO:0000269" key="5">
    <source>
    </source>
</evidence>
<evidence type="ECO:0000269" key="6">
    <source>
    </source>
</evidence>
<evidence type="ECO:0000269" key="7">
    <source>
    </source>
</evidence>
<evidence type="ECO:0000269" key="8">
    <source>
    </source>
</evidence>
<evidence type="ECO:0000303" key="9">
    <source>
    </source>
</evidence>
<evidence type="ECO:0000303" key="10">
    <source>
    </source>
</evidence>
<evidence type="ECO:0000305" key="11"/>
<evidence type="ECO:0000305" key="12">
    <source>
    </source>
</evidence>
<evidence type="ECO:0000312" key="13">
    <source>
        <dbReference type="EMBL" id="KRH03285.1"/>
    </source>
</evidence>
<keyword id="KW-0067">ATP-binding</keyword>
<keyword id="KW-0418">Kinase</keyword>
<keyword id="KW-0460">Magnesium</keyword>
<keyword id="KW-0479">Metal-binding</keyword>
<keyword id="KW-0547">Nucleotide-binding</keyword>
<keyword id="KW-1185">Reference proteome</keyword>
<keyword id="KW-0346">Stress response</keyword>
<keyword id="KW-0808">Transferase</keyword>
<gene>
    <name evidence="9" type="primary">ITPK2</name>
    <name evidence="13" type="ORF">GLYMA_17G089000</name>
</gene>
<protein>
    <recommendedName>
        <fullName evidence="9">Inositol-tetrakisphosphate 1-kinase 2</fullName>
        <shortName evidence="9 10">GmItpk2</shortName>
        <ecNumber evidence="5">2.7.1.134</ecNumber>
    </recommendedName>
    <alternativeName>
        <fullName evidence="2">Inositol 1,3,4-trisphosphate 5/6-kinase 2</fullName>
        <shortName evidence="2">Inositol-triphosphate 5/6-kinase 2</shortName>
        <shortName evidence="2">Ins(1,3,4)P(3) 5/6-kinase 2</shortName>
        <ecNumber evidence="5">2.7.1.159</ecNumber>
    </alternativeName>
    <alternativeName>
        <fullName evidence="12">Inositol-hexakisphosphate 5-kinase</fullName>
        <ecNumber evidence="8">2.7.4.21</ecNumber>
    </alternativeName>
</protein>